<proteinExistence type="inferred from homology"/>
<name>GLMM_METTH</name>
<feature type="chain" id="PRO_0000337809" description="Probable phosphoglucosamine mutase">
    <location>
        <begin position="1"/>
        <end position="449"/>
    </location>
</feature>
<feature type="active site" description="Phosphoserine intermediate" evidence="1">
    <location>
        <position position="101"/>
    </location>
</feature>
<feature type="binding site" description="via phosphate group" evidence="1">
    <location>
        <position position="101"/>
    </location>
    <ligand>
        <name>Mg(2+)</name>
        <dbReference type="ChEBI" id="CHEBI:18420"/>
    </ligand>
</feature>
<feature type="binding site" evidence="1">
    <location>
        <position position="239"/>
    </location>
    <ligand>
        <name>Mg(2+)</name>
        <dbReference type="ChEBI" id="CHEBI:18420"/>
    </ligand>
</feature>
<feature type="binding site" evidence="1">
    <location>
        <position position="241"/>
    </location>
    <ligand>
        <name>Mg(2+)</name>
        <dbReference type="ChEBI" id="CHEBI:18420"/>
    </ligand>
</feature>
<feature type="binding site" evidence="1">
    <location>
        <position position="243"/>
    </location>
    <ligand>
        <name>Mg(2+)</name>
        <dbReference type="ChEBI" id="CHEBI:18420"/>
    </ligand>
</feature>
<feature type="modified residue" description="Phosphoserine" evidence="1">
    <location>
        <position position="101"/>
    </location>
</feature>
<protein>
    <recommendedName>
        <fullName evidence="1">Probable phosphoglucosamine mutase</fullName>
        <ecNumber evidence="1">5.4.2.10</ecNumber>
    </recommendedName>
</protein>
<accession>O27627</accession>
<keyword id="KW-0413">Isomerase</keyword>
<keyword id="KW-0460">Magnesium</keyword>
<keyword id="KW-0479">Metal-binding</keyword>
<keyword id="KW-0597">Phosphoprotein</keyword>
<keyword id="KW-1185">Reference proteome</keyword>
<reference key="1">
    <citation type="journal article" date="1997" name="J. Bacteriol.">
        <title>Complete genome sequence of Methanobacterium thermoautotrophicum deltaH: functional analysis and comparative genomics.</title>
        <authorList>
            <person name="Smith D.R."/>
            <person name="Doucette-Stamm L.A."/>
            <person name="Deloughery C."/>
            <person name="Lee H.-M."/>
            <person name="Dubois J."/>
            <person name="Aldredge T."/>
            <person name="Bashirzadeh R."/>
            <person name="Blakely D."/>
            <person name="Cook R."/>
            <person name="Gilbert K."/>
            <person name="Harrison D."/>
            <person name="Hoang L."/>
            <person name="Keagle P."/>
            <person name="Lumm W."/>
            <person name="Pothier B."/>
            <person name="Qiu D."/>
            <person name="Spadafora R."/>
            <person name="Vicare R."/>
            <person name="Wang Y."/>
            <person name="Wierzbowski J."/>
            <person name="Gibson R."/>
            <person name="Jiwani N."/>
            <person name="Caruso A."/>
            <person name="Bush D."/>
            <person name="Safer H."/>
            <person name="Patwell D."/>
            <person name="Prabhakar S."/>
            <person name="McDougall S."/>
            <person name="Shimer G."/>
            <person name="Goyal A."/>
            <person name="Pietrovski S."/>
            <person name="Church G.M."/>
            <person name="Daniels C.J."/>
            <person name="Mao J.-I."/>
            <person name="Rice P."/>
            <person name="Noelling J."/>
            <person name="Reeve J.N."/>
        </authorList>
    </citation>
    <scope>NUCLEOTIDE SEQUENCE [LARGE SCALE GENOMIC DNA]</scope>
    <source>
        <strain>ATCC 29096 / DSM 1053 / JCM 10044 / NBRC 100330 / Delta H</strain>
    </source>
</reference>
<dbReference type="EC" id="5.4.2.10" evidence="1"/>
<dbReference type="EMBL" id="AE000666">
    <property type="protein sequence ID" value="AAB86063.1"/>
    <property type="molecule type" value="Genomic_DNA"/>
</dbReference>
<dbReference type="PIR" id="C69079">
    <property type="entry name" value="C69079"/>
</dbReference>
<dbReference type="RefSeq" id="WP_010877198.1">
    <property type="nucleotide sequence ID" value="NC_000916.1"/>
</dbReference>
<dbReference type="SMR" id="O27627"/>
<dbReference type="FunCoup" id="O27627">
    <property type="interactions" value="90"/>
</dbReference>
<dbReference type="STRING" id="187420.MTH_1590"/>
<dbReference type="PaxDb" id="187420-MTH_1590"/>
<dbReference type="EnsemblBacteria" id="AAB86063">
    <property type="protein sequence ID" value="AAB86063"/>
    <property type="gene ID" value="MTH_1590"/>
</dbReference>
<dbReference type="GeneID" id="1471859"/>
<dbReference type="KEGG" id="mth:MTH_1590"/>
<dbReference type="PATRIC" id="fig|187420.15.peg.1553"/>
<dbReference type="HOGENOM" id="CLU_016950_7_1_2"/>
<dbReference type="InParanoid" id="O27627"/>
<dbReference type="Proteomes" id="UP000005223">
    <property type="component" value="Chromosome"/>
</dbReference>
<dbReference type="GO" id="GO:0000287">
    <property type="term" value="F:magnesium ion binding"/>
    <property type="evidence" value="ECO:0007669"/>
    <property type="project" value="UniProtKB-UniRule"/>
</dbReference>
<dbReference type="GO" id="GO:0008966">
    <property type="term" value="F:phosphoglucosamine mutase activity"/>
    <property type="evidence" value="ECO:0007669"/>
    <property type="project" value="UniProtKB-UniRule"/>
</dbReference>
<dbReference type="GO" id="GO:0005975">
    <property type="term" value="P:carbohydrate metabolic process"/>
    <property type="evidence" value="ECO:0007669"/>
    <property type="project" value="InterPro"/>
</dbReference>
<dbReference type="CDD" id="cd03087">
    <property type="entry name" value="PGM_like1"/>
    <property type="match status" value="1"/>
</dbReference>
<dbReference type="FunFam" id="3.40.120.10:FF:000001">
    <property type="entry name" value="Phosphoglucosamine mutase"/>
    <property type="match status" value="1"/>
</dbReference>
<dbReference type="FunFam" id="3.40.120.10:FF:000003">
    <property type="entry name" value="Phosphoglucosamine mutase"/>
    <property type="match status" value="1"/>
</dbReference>
<dbReference type="Gene3D" id="3.40.120.10">
    <property type="entry name" value="Alpha-D-Glucose-1,6-Bisphosphate, subunit A, domain 3"/>
    <property type="match status" value="3"/>
</dbReference>
<dbReference type="Gene3D" id="3.30.310.50">
    <property type="entry name" value="Alpha-D-phosphohexomutase, C-terminal domain"/>
    <property type="match status" value="1"/>
</dbReference>
<dbReference type="HAMAP" id="MF_01554_A">
    <property type="entry name" value="GlmM_A"/>
    <property type="match status" value="1"/>
</dbReference>
<dbReference type="InterPro" id="IPR005844">
    <property type="entry name" value="A-D-PHexomutase_a/b/a-I"/>
</dbReference>
<dbReference type="InterPro" id="IPR016055">
    <property type="entry name" value="A-D-PHexomutase_a/b/a-I/II/III"/>
</dbReference>
<dbReference type="InterPro" id="IPR005845">
    <property type="entry name" value="A-D-PHexomutase_a/b/a-II"/>
</dbReference>
<dbReference type="InterPro" id="IPR005846">
    <property type="entry name" value="A-D-PHexomutase_a/b/a-III"/>
</dbReference>
<dbReference type="InterPro" id="IPR005843">
    <property type="entry name" value="A-D-PHexomutase_C"/>
</dbReference>
<dbReference type="InterPro" id="IPR036900">
    <property type="entry name" value="A-D-PHexomutase_C_sf"/>
</dbReference>
<dbReference type="InterPro" id="IPR016066">
    <property type="entry name" value="A-D-PHexomutase_CS"/>
</dbReference>
<dbReference type="InterPro" id="IPR005841">
    <property type="entry name" value="Alpha-D-phosphohexomutase_SF"/>
</dbReference>
<dbReference type="InterPro" id="IPR023666">
    <property type="entry name" value="GlmM_arc"/>
</dbReference>
<dbReference type="InterPro" id="IPR024086">
    <property type="entry name" value="GlmM_arc-type"/>
</dbReference>
<dbReference type="NCBIfam" id="TIGR03990">
    <property type="entry name" value="Arch_GlmM"/>
    <property type="match status" value="1"/>
</dbReference>
<dbReference type="PANTHER" id="PTHR43771">
    <property type="entry name" value="PHOSPHOMANNOMUTASE"/>
    <property type="match status" value="1"/>
</dbReference>
<dbReference type="PANTHER" id="PTHR43771:SF1">
    <property type="entry name" value="PHOSPHOMANNOMUTASE"/>
    <property type="match status" value="1"/>
</dbReference>
<dbReference type="Pfam" id="PF02878">
    <property type="entry name" value="PGM_PMM_I"/>
    <property type="match status" value="1"/>
</dbReference>
<dbReference type="Pfam" id="PF02879">
    <property type="entry name" value="PGM_PMM_II"/>
    <property type="match status" value="1"/>
</dbReference>
<dbReference type="Pfam" id="PF02880">
    <property type="entry name" value="PGM_PMM_III"/>
    <property type="match status" value="1"/>
</dbReference>
<dbReference type="Pfam" id="PF00408">
    <property type="entry name" value="PGM_PMM_IV"/>
    <property type="match status" value="1"/>
</dbReference>
<dbReference type="PRINTS" id="PR00509">
    <property type="entry name" value="PGMPMM"/>
</dbReference>
<dbReference type="SUPFAM" id="SSF55957">
    <property type="entry name" value="Phosphoglucomutase, C-terminal domain"/>
    <property type="match status" value="1"/>
</dbReference>
<dbReference type="SUPFAM" id="SSF53738">
    <property type="entry name" value="Phosphoglucomutase, first 3 domains"/>
    <property type="match status" value="3"/>
</dbReference>
<dbReference type="PROSITE" id="PS00710">
    <property type="entry name" value="PGM_PMM"/>
    <property type="match status" value="1"/>
</dbReference>
<sequence length="449" mass="48915">MKEKKPRLFGTSGIRGRFGEKVTLELTAEHRKALATHLGGDGEVVVGYDTRTSSQLLENALIAGIVECGCDVTRLGMVPTPLVGYAASRLGAAAGVMITASHNPAPYNGIKLWNPDGMAYRPSQERVIESIIHSRDFKRKAWDELGSITTVDMRDDYVRAVLETVEIKKPLKVVIDSGCGAASHLSPLIFRKAGCRVITLNSQPDGFFPGRDPEPVPENLSELMETVRSTGADLGIAHDGDADRMVAIDDQGRFASFDKLLALMAREIGGKIITTVDASLCVDECLGDRGEVIRTRVGDVHVANTIAEEGARFGGEPSGTWLHPDFCMCPDGILSALRVAELVSARGPLSELLEEVPSYPNIRDKVPCPDEKKDIIMERVAAELSDQFSETSDINTIDGVRISLDDGSWVLVRPSGTEPYIRITLEGKTEEKARYIHERTRGYLENVIG</sequence>
<organism>
    <name type="scientific">Methanothermobacter thermautotrophicus (strain ATCC 29096 / DSM 1053 / JCM 10044 / NBRC 100330 / Delta H)</name>
    <name type="common">Methanobacterium thermoautotrophicum</name>
    <dbReference type="NCBI Taxonomy" id="187420"/>
    <lineage>
        <taxon>Archaea</taxon>
        <taxon>Methanobacteriati</taxon>
        <taxon>Methanobacteriota</taxon>
        <taxon>Methanomada group</taxon>
        <taxon>Methanobacteria</taxon>
        <taxon>Methanobacteriales</taxon>
        <taxon>Methanobacteriaceae</taxon>
        <taxon>Methanothermobacter</taxon>
    </lineage>
</organism>
<evidence type="ECO:0000255" key="1">
    <source>
        <dbReference type="HAMAP-Rule" id="MF_01554"/>
    </source>
</evidence>
<gene>
    <name evidence="1" type="primary">glmM</name>
    <name type="ordered locus">MTH_1590</name>
</gene>
<comment type="function">
    <text evidence="1">Catalyzes the conversion of glucosamine-6-phosphate to glucosamine-1-phosphate.</text>
</comment>
<comment type="catalytic activity">
    <reaction evidence="1">
        <text>alpha-D-glucosamine 1-phosphate = D-glucosamine 6-phosphate</text>
        <dbReference type="Rhea" id="RHEA:23424"/>
        <dbReference type="ChEBI" id="CHEBI:58516"/>
        <dbReference type="ChEBI" id="CHEBI:58725"/>
        <dbReference type="EC" id="5.4.2.10"/>
    </reaction>
</comment>
<comment type="cofactor">
    <cofactor evidence="1">
        <name>Mg(2+)</name>
        <dbReference type="ChEBI" id="CHEBI:18420"/>
    </cofactor>
    <text evidence="1">Binds 1 Mg(2+) ion per subunit.</text>
</comment>
<comment type="PTM">
    <text evidence="1">Activated by phosphorylation.</text>
</comment>
<comment type="similarity">
    <text evidence="1">Belongs to the phosphohexose mutase family.</text>
</comment>